<reference key="1">
    <citation type="journal article" date="2006" name="Proc. Natl. Acad. Sci. U.S.A.">
        <title>Genome sequence of Synechococcus CC9311: insights into adaptation to a coastal environment.</title>
        <authorList>
            <person name="Palenik B."/>
            <person name="Ren Q."/>
            <person name="Dupont C.L."/>
            <person name="Myers G.S."/>
            <person name="Heidelberg J.F."/>
            <person name="Badger J.H."/>
            <person name="Madupu R."/>
            <person name="Nelson W.C."/>
            <person name="Brinkac L.M."/>
            <person name="Dodson R.J."/>
            <person name="Durkin A.S."/>
            <person name="Daugherty S.C."/>
            <person name="Sullivan S.A."/>
            <person name="Khouri H."/>
            <person name="Mohamoud Y."/>
            <person name="Halpin R."/>
            <person name="Paulsen I.T."/>
        </authorList>
    </citation>
    <scope>NUCLEOTIDE SEQUENCE [LARGE SCALE GENOMIC DNA]</scope>
    <source>
        <strain>CC9311</strain>
    </source>
</reference>
<accession>Q0I7L9</accession>
<comment type="function">
    <text evidence="1">DNA-dependent RNA polymerase catalyzes the transcription of DNA into RNA using the four ribonucleoside triphosphates as substrates.</text>
</comment>
<comment type="catalytic activity">
    <reaction evidence="1">
        <text>RNA(n) + a ribonucleoside 5'-triphosphate = RNA(n+1) + diphosphate</text>
        <dbReference type="Rhea" id="RHEA:21248"/>
        <dbReference type="Rhea" id="RHEA-COMP:14527"/>
        <dbReference type="Rhea" id="RHEA-COMP:17342"/>
        <dbReference type="ChEBI" id="CHEBI:33019"/>
        <dbReference type="ChEBI" id="CHEBI:61557"/>
        <dbReference type="ChEBI" id="CHEBI:140395"/>
        <dbReference type="EC" id="2.7.7.6"/>
    </reaction>
</comment>
<comment type="cofactor">
    <cofactor evidence="1">
        <name>Zn(2+)</name>
        <dbReference type="ChEBI" id="CHEBI:29105"/>
    </cofactor>
    <text evidence="1">Binds 1 Zn(2+) ion per subunit.</text>
</comment>
<comment type="subunit">
    <text evidence="1">In cyanobacteria the RNAP catalytic core is composed of 2 alpha, 1 beta, 1 beta', 1 gamma and 1 omega subunit. When a sigma factor is associated with the core the holoenzyme is formed, which can initiate transcription.</text>
</comment>
<comment type="similarity">
    <text evidence="1">Belongs to the RNA polymerase beta' chain family. RpoC2 subfamily.</text>
</comment>
<organism>
    <name type="scientific">Synechococcus sp. (strain CC9311)</name>
    <dbReference type="NCBI Taxonomy" id="64471"/>
    <lineage>
        <taxon>Bacteria</taxon>
        <taxon>Bacillati</taxon>
        <taxon>Cyanobacteriota</taxon>
        <taxon>Cyanophyceae</taxon>
        <taxon>Synechococcales</taxon>
        <taxon>Synechococcaceae</taxon>
        <taxon>Synechococcus</taxon>
    </lineage>
</organism>
<feature type="chain" id="PRO_0000353534" description="DNA-directed RNA polymerase subunit beta'">
    <location>
        <begin position="1"/>
        <end position="1365"/>
    </location>
</feature>
<feature type="binding site" evidence="1">
    <location>
        <position position="249"/>
    </location>
    <ligand>
        <name>Zn(2+)</name>
        <dbReference type="ChEBI" id="CHEBI:29105"/>
    </ligand>
</feature>
<feature type="binding site" evidence="1">
    <location>
        <position position="316"/>
    </location>
    <ligand>
        <name>Zn(2+)</name>
        <dbReference type="ChEBI" id="CHEBI:29105"/>
    </ligand>
</feature>
<feature type="binding site" evidence="1">
    <location>
        <position position="323"/>
    </location>
    <ligand>
        <name>Zn(2+)</name>
        <dbReference type="ChEBI" id="CHEBI:29105"/>
    </ligand>
</feature>
<feature type="binding site" evidence="1">
    <location>
        <position position="326"/>
    </location>
    <ligand>
        <name>Zn(2+)</name>
        <dbReference type="ChEBI" id="CHEBI:29105"/>
    </ligand>
</feature>
<proteinExistence type="inferred from homology"/>
<dbReference type="EC" id="2.7.7.6" evidence="1"/>
<dbReference type="EMBL" id="CP000435">
    <property type="protein sequence ID" value="ABI46015.1"/>
    <property type="molecule type" value="Genomic_DNA"/>
</dbReference>
<dbReference type="RefSeq" id="WP_011620263.1">
    <property type="nucleotide sequence ID" value="NC_008319.1"/>
</dbReference>
<dbReference type="SMR" id="Q0I7L9"/>
<dbReference type="STRING" id="64471.sync_2356"/>
<dbReference type="KEGG" id="syg:sync_2356"/>
<dbReference type="eggNOG" id="COG0086">
    <property type="taxonomic scope" value="Bacteria"/>
</dbReference>
<dbReference type="HOGENOM" id="CLU_000524_1_0_3"/>
<dbReference type="OrthoDB" id="9815296at2"/>
<dbReference type="Proteomes" id="UP000001961">
    <property type="component" value="Chromosome"/>
</dbReference>
<dbReference type="GO" id="GO:0000428">
    <property type="term" value="C:DNA-directed RNA polymerase complex"/>
    <property type="evidence" value="ECO:0007669"/>
    <property type="project" value="UniProtKB-KW"/>
</dbReference>
<dbReference type="GO" id="GO:0003677">
    <property type="term" value="F:DNA binding"/>
    <property type="evidence" value="ECO:0007669"/>
    <property type="project" value="UniProtKB-UniRule"/>
</dbReference>
<dbReference type="GO" id="GO:0003899">
    <property type="term" value="F:DNA-directed RNA polymerase activity"/>
    <property type="evidence" value="ECO:0007669"/>
    <property type="project" value="UniProtKB-UniRule"/>
</dbReference>
<dbReference type="GO" id="GO:0008270">
    <property type="term" value="F:zinc ion binding"/>
    <property type="evidence" value="ECO:0007669"/>
    <property type="project" value="UniProtKB-UniRule"/>
</dbReference>
<dbReference type="GO" id="GO:0006351">
    <property type="term" value="P:DNA-templated transcription"/>
    <property type="evidence" value="ECO:0007669"/>
    <property type="project" value="UniProtKB-UniRule"/>
</dbReference>
<dbReference type="CDD" id="cd02655">
    <property type="entry name" value="RNAP_beta'_C"/>
    <property type="match status" value="1"/>
</dbReference>
<dbReference type="FunFam" id="1.10.150.390:FF:000002">
    <property type="entry name" value="DNA-directed RNA polymerase subunit beta"/>
    <property type="match status" value="1"/>
</dbReference>
<dbReference type="Gene3D" id="1.10.132.30">
    <property type="match status" value="1"/>
</dbReference>
<dbReference type="Gene3D" id="1.10.150.390">
    <property type="match status" value="1"/>
</dbReference>
<dbReference type="Gene3D" id="1.10.1790.20">
    <property type="match status" value="1"/>
</dbReference>
<dbReference type="Gene3D" id="2.40.50.100">
    <property type="match status" value="1"/>
</dbReference>
<dbReference type="Gene3D" id="1.10.274.100">
    <property type="entry name" value="RNA polymerase Rpb1, domain 3"/>
    <property type="match status" value="1"/>
</dbReference>
<dbReference type="HAMAP" id="MF_01324">
    <property type="entry name" value="RNApol_bact_RpoC2"/>
    <property type="match status" value="1"/>
</dbReference>
<dbReference type="InterPro" id="IPR012756">
    <property type="entry name" value="DNA-dir_RpoC2_beta_pp"/>
</dbReference>
<dbReference type="InterPro" id="IPR045867">
    <property type="entry name" value="DNA-dir_RpoC_beta_prime"/>
</dbReference>
<dbReference type="InterPro" id="IPR007066">
    <property type="entry name" value="RNA_pol_Rpb1_3"/>
</dbReference>
<dbReference type="InterPro" id="IPR042102">
    <property type="entry name" value="RNA_pol_Rpb1_3_sf"/>
</dbReference>
<dbReference type="InterPro" id="IPR007083">
    <property type="entry name" value="RNA_pol_Rpb1_4"/>
</dbReference>
<dbReference type="InterPro" id="IPR007081">
    <property type="entry name" value="RNA_pol_Rpb1_5"/>
</dbReference>
<dbReference type="InterPro" id="IPR038120">
    <property type="entry name" value="Rpb1_funnel_sf"/>
</dbReference>
<dbReference type="NCBIfam" id="NF002724">
    <property type="entry name" value="PRK02597.1"/>
    <property type="match status" value="1"/>
</dbReference>
<dbReference type="NCBIfam" id="TIGR02388">
    <property type="entry name" value="rpoC2_cyan"/>
    <property type="match status" value="1"/>
</dbReference>
<dbReference type="PANTHER" id="PTHR19376">
    <property type="entry name" value="DNA-DIRECTED RNA POLYMERASE"/>
    <property type="match status" value="1"/>
</dbReference>
<dbReference type="Pfam" id="PF04983">
    <property type="entry name" value="RNA_pol_Rpb1_3"/>
    <property type="match status" value="1"/>
</dbReference>
<dbReference type="Pfam" id="PF05000">
    <property type="entry name" value="RNA_pol_Rpb1_4"/>
    <property type="match status" value="1"/>
</dbReference>
<dbReference type="Pfam" id="PF04998">
    <property type="entry name" value="RNA_pol_Rpb1_5"/>
    <property type="match status" value="1"/>
</dbReference>
<dbReference type="SUPFAM" id="SSF64484">
    <property type="entry name" value="beta and beta-prime subunits of DNA dependent RNA-polymerase"/>
    <property type="match status" value="1"/>
</dbReference>
<evidence type="ECO:0000255" key="1">
    <source>
        <dbReference type="HAMAP-Rule" id="MF_01324"/>
    </source>
</evidence>
<sequence>MTSTPSKSRKSAKAAKAAKAEAAAFAKSRALSKTPPPFRNRVVDKKVLKELVAWAFKNHGTAATASMADQLKDLGFKYATQAAVSISVNDLKVPAAKKDLLDQAEELITETEESYRLGVITEVERHTKVIDTWTETNERLVDAVKKNFNDNDPLNSVWMMANSGARGNMSQVRQLVGMRGLMANPQGEIIDLPIRTNFREGLTVTEYVISSYGARKGLVDTALRTADSGYLTRRLVDVAQDVIVREDDCGTMRSIMVKAEDGRFGNRLVGRLTADQVLGADGEVIAERNSEIDPPLSKRFEAAGVSALMVRSPLTCEANRSVCRKCYGWALAHNQLVDLGEAVGIIAAQSIGEPGTQLTMRTFHTGGVSTAESGVVRSKFEGTVEFGSKAKVRPYRTPHGVNAQQSDVDFSLTIKPSGSGKPQKIEITNGSLLFVDDGQKIASDVTVATIAAGAVQKSVEKATKDVICDLAGQVSYDPTIQPREVTDRQGNITHKAQRLGRMWVLAGDVYNLPPNARPVVSSGGSVIESQVLAEASQASEYGGAIRLREALGDSREVQIVTTSMTLRDFKLLGESTHAGEIWNLEAKDGTRYRLNTIPGSKIGNAEVIAELADDRFRTQTGGLVKFAPGLAIKKARSAKNGYEVNKGGTLLWIPQETHEINKDISLLMITDGQWIEAGTEVVKDIFSQTAGIVSVTQKNDILREIIVRSGSFHLCTEKKALERFQGDGVMVNPGEAIAKGISSDAMVFVQAVETPEGTGLLLRPVEEYTIPNEAQLPDLGHVKQPNGPHLGIKATQRLAFKDNELVKSVEGVELLRTQLMLETFDTTPQMTVDVEAVPDKRAKTIERLQLVILESILVRRDTISDSSHGSTHTELQVEDGQSIKAGDVVATTQILCKQAGVAEMPEATEDEPVRRLIVERPEDTITINTSGAPVVTVGQRVVDGEELAQGQPSDCCGEVEQVSANSVTMRLGRPYMISPDSLLHVRDGDLVQRGDGLALLVFERQKTGDIVQGLPRIEELLEARRPRESSILCKKPGTVEIKQGEDDEFTTVTVIESDDAIAEYPILLGRNVMVSDGQQVNAGELLTDGPINPHELLECFFEDLRSRKPLMDAAQEAIAKLQHRLVTEVQNVYKSQGVSIHDKHIEVIVRQMTSKVRIEDAGDTTLLPGELIELRQVENTNQAMSITGGAPAEFTPVLLGITKASLNTDSFISAASFQETTRVLTEAAIEGKSDWLRGLKENVIIGRLIPAGTGFSGFEEELRAEAGPHPDILSEDPAGYRRMQNLRPDYTVDMPAAPAAKSTALLDDPSAADLEATRSRHGIEAEASNFAAFTRPDADNELAEEQVLDPAAVENLQEQGLLSDE</sequence>
<name>RPOC2_SYNS3</name>
<protein>
    <recommendedName>
        <fullName evidence="1">DNA-directed RNA polymerase subunit beta'</fullName>
        <shortName evidence="1">RNAP subunit beta'</shortName>
        <ecNumber evidence="1">2.7.7.6</ecNumber>
    </recommendedName>
    <alternativeName>
        <fullName evidence="1">RNA polymerase subunit beta'</fullName>
    </alternativeName>
    <alternativeName>
        <fullName evidence="1">Transcriptase subunit beta'</fullName>
    </alternativeName>
</protein>
<gene>
    <name evidence="1" type="primary">rpoC2</name>
    <name type="ordered locus">sync_2356</name>
</gene>
<keyword id="KW-0240">DNA-directed RNA polymerase</keyword>
<keyword id="KW-0479">Metal-binding</keyword>
<keyword id="KW-0548">Nucleotidyltransferase</keyword>
<keyword id="KW-1185">Reference proteome</keyword>
<keyword id="KW-0804">Transcription</keyword>
<keyword id="KW-0808">Transferase</keyword>
<keyword id="KW-0862">Zinc</keyword>